<proteinExistence type="inferred from homology"/>
<gene>
    <name type="primary">HSP70IV</name>
</gene>
<protein>
    <recommendedName>
        <fullName>Heat shock 70 kDa protein IV</fullName>
        <shortName>HSP70 IV</shortName>
    </recommendedName>
</protein>
<dbReference type="EMBL" id="X61379">
    <property type="protein sequence ID" value="CAA43653.1"/>
    <property type="molecule type" value="Genomic_DNA"/>
</dbReference>
<dbReference type="PIR" id="JC1391">
    <property type="entry name" value="JC1391"/>
</dbReference>
<dbReference type="SMR" id="Q06248"/>
<dbReference type="GO" id="GO:0005524">
    <property type="term" value="F:ATP binding"/>
    <property type="evidence" value="ECO:0007669"/>
    <property type="project" value="UniProtKB-KW"/>
</dbReference>
<dbReference type="GO" id="GO:0140662">
    <property type="term" value="F:ATP-dependent protein folding chaperone"/>
    <property type="evidence" value="ECO:0007669"/>
    <property type="project" value="InterPro"/>
</dbReference>
<dbReference type="CDD" id="cd10233">
    <property type="entry name" value="ASKHA_NBD_HSP70_HSPA1"/>
    <property type="match status" value="1"/>
</dbReference>
<dbReference type="FunFam" id="2.60.34.10:FF:000002">
    <property type="entry name" value="Heat shock 70 kDa"/>
    <property type="match status" value="1"/>
</dbReference>
<dbReference type="FunFam" id="3.90.640.10:FF:000002">
    <property type="entry name" value="Heat shock 70 kDa"/>
    <property type="match status" value="1"/>
</dbReference>
<dbReference type="FunFam" id="3.30.30.30:FF:000001">
    <property type="entry name" value="heat shock 70 kDa protein-like"/>
    <property type="match status" value="1"/>
</dbReference>
<dbReference type="FunFam" id="3.30.420.40:FF:000028">
    <property type="entry name" value="heat shock 70 kDa protein-like"/>
    <property type="match status" value="1"/>
</dbReference>
<dbReference type="FunFam" id="1.20.1270.10:FF:000024">
    <property type="entry name" value="Heat shock protein 70"/>
    <property type="match status" value="1"/>
</dbReference>
<dbReference type="FunFam" id="3.30.420.40:FF:000026">
    <property type="entry name" value="Heat shock protein 70"/>
    <property type="match status" value="1"/>
</dbReference>
<dbReference type="Gene3D" id="1.20.1270.10">
    <property type="match status" value="1"/>
</dbReference>
<dbReference type="Gene3D" id="3.30.30.30">
    <property type="match status" value="1"/>
</dbReference>
<dbReference type="Gene3D" id="3.30.420.40">
    <property type="match status" value="2"/>
</dbReference>
<dbReference type="Gene3D" id="3.90.640.10">
    <property type="entry name" value="Actin, Chain A, domain 4"/>
    <property type="match status" value="1"/>
</dbReference>
<dbReference type="Gene3D" id="2.60.34.10">
    <property type="entry name" value="Substrate Binding Domain Of DNAk, Chain A, domain 1"/>
    <property type="match status" value="1"/>
</dbReference>
<dbReference type="InterPro" id="IPR043129">
    <property type="entry name" value="ATPase_NBD"/>
</dbReference>
<dbReference type="InterPro" id="IPR018181">
    <property type="entry name" value="Heat_shock_70_CS"/>
</dbReference>
<dbReference type="InterPro" id="IPR029048">
    <property type="entry name" value="HSP70_C_sf"/>
</dbReference>
<dbReference type="InterPro" id="IPR029047">
    <property type="entry name" value="HSP70_peptide-bd_sf"/>
</dbReference>
<dbReference type="InterPro" id="IPR013126">
    <property type="entry name" value="Hsp_70_fam"/>
</dbReference>
<dbReference type="NCBIfam" id="NF001413">
    <property type="entry name" value="PRK00290.1"/>
    <property type="match status" value="1"/>
</dbReference>
<dbReference type="PANTHER" id="PTHR19375">
    <property type="entry name" value="HEAT SHOCK PROTEIN 70KDA"/>
    <property type="match status" value="1"/>
</dbReference>
<dbReference type="Pfam" id="PF00012">
    <property type="entry name" value="HSP70"/>
    <property type="match status" value="1"/>
</dbReference>
<dbReference type="PRINTS" id="PR00301">
    <property type="entry name" value="HEATSHOCK70"/>
</dbReference>
<dbReference type="SUPFAM" id="SSF53067">
    <property type="entry name" value="Actin-like ATPase domain"/>
    <property type="match status" value="2"/>
</dbReference>
<dbReference type="SUPFAM" id="SSF100934">
    <property type="entry name" value="Heat shock protein 70kD (HSP70), C-terminal subdomain"/>
    <property type="match status" value="1"/>
</dbReference>
<dbReference type="SUPFAM" id="SSF100920">
    <property type="entry name" value="Heat shock protein 70kD (HSP70), peptide-binding domain"/>
    <property type="match status" value="1"/>
</dbReference>
<dbReference type="PROSITE" id="PS00297">
    <property type="entry name" value="HSP70_1"/>
    <property type="match status" value="1"/>
</dbReference>
<dbReference type="PROSITE" id="PS00329">
    <property type="entry name" value="HSP70_2"/>
    <property type="match status" value="1"/>
</dbReference>
<dbReference type="PROSITE" id="PS01036">
    <property type="entry name" value="HSP70_3"/>
    <property type="match status" value="1"/>
</dbReference>
<evidence type="ECO:0000256" key="1">
    <source>
        <dbReference type="SAM" id="MobiDB-lite"/>
    </source>
</evidence>
<evidence type="ECO:0000305" key="2"/>
<feature type="chain" id="PRO_0000078317" description="Heat shock 70 kDa protein IV">
    <location>
        <begin position="1"/>
        <end position="639"/>
    </location>
</feature>
<feature type="region of interest" description="Disordered" evidence="1">
    <location>
        <begin position="609"/>
        <end position="639"/>
    </location>
</feature>
<feature type="compositionally biased region" description="Gly residues" evidence="1">
    <location>
        <begin position="613"/>
        <end position="632"/>
    </location>
</feature>
<keyword id="KW-0067">ATP-binding</keyword>
<keyword id="KW-0547">Nucleotide-binding</keyword>
<keyword id="KW-0346">Stress response</keyword>
<organism>
    <name type="scientific">Paracentrotus lividus</name>
    <name type="common">Common sea urchin</name>
    <dbReference type="NCBI Taxonomy" id="7656"/>
    <lineage>
        <taxon>Eukaryota</taxon>
        <taxon>Metazoa</taxon>
        <taxon>Echinodermata</taxon>
        <taxon>Eleutherozoa</taxon>
        <taxon>Echinozoa</taxon>
        <taxon>Echinoidea</taxon>
        <taxon>Euechinoidea</taxon>
        <taxon>Echinacea</taxon>
        <taxon>Camarodonta</taxon>
        <taxon>Echinidea</taxon>
        <taxon>Echinidae</taxon>
        <taxon>Paracentrotus</taxon>
    </lineage>
</organism>
<comment type="similarity">
    <text evidence="2">Belongs to the heat shock protein 70 family.</text>
</comment>
<sequence>MESGPAIGIDLGTTYSCVGVFQNGKVEIIANDQGNRTTPSYVAFTDSERLIGDAAKNQVAMNPTNTIFDAKRLIGRRFNDSSIQADMKHWPFRVINKDGKPMLQAEYMGETKTLSPEEVSSMVLTKMKETAEAYLGKKVTSAVITVPAYFNDAQRQATKDAGVIAGINVLRIINEPTRAALAYGLDKKLTGEKHVLIFDLGGGTFDVSLLAIDDGVFEVLTTAGDTHLGGEDFDNRLVNHTSLEFKRKYKKDMRTNPRAIRRLRTAAERAKRTLSSSAQANIEVDSLFEGIDFYTSISRARFEDLCSDLFRKCLEPVERAILDAKIDKKKIDTVVLVGGSTRIPKIQKLLQEFLNGKELNKSINPDEAVAYGAAVQAAILSGDKSDEIKDVLLVDVAPLSLGIETAGGVMSKIIERNTRVPTKASQTFTTYSDNQPGVSIQVFEGERAMTKDNNRLGQFELSGIPPAPRGRPKIEVSFDIDANGIMHVTAKDESSGRSNKITITNDSDRLSKDDIDRMINDAERFKAEDDAQRERINAKNQLEGYAFNLKSAVDDAAAQSKLSPGDKETVTKAVNDVLQWLDSNSLADKEEFTYKLEELQKTCSPIMAKMHAGTGGPRGGGPQGFPSGGAGGPTVEEVD</sequence>
<reference key="1">
    <citation type="journal article" date="1992" name="Gene">
        <title>Characterization of a new member of the sea urchin Paracentrotus lividus hsp70 gene family and its expression.</title>
        <authorList>
            <person name="Sconzo G."/>
            <person name="Scardina G."/>
            <person name="Ferraro M.G."/>
        </authorList>
    </citation>
    <scope>NUCLEOTIDE SEQUENCE [GENOMIC DNA]</scope>
</reference>
<accession>Q06248</accession>
<name>HSP74_PARLI</name>